<organism>
    <name type="scientific">Baumannia cicadellinicola subsp. Homalodisca coagulata</name>
    <dbReference type="NCBI Taxonomy" id="374463"/>
    <lineage>
        <taxon>Bacteria</taxon>
        <taxon>Pseudomonadati</taxon>
        <taxon>Pseudomonadota</taxon>
        <taxon>Gammaproteobacteria</taxon>
        <taxon>Candidatus Palibaumannia</taxon>
    </lineage>
</organism>
<evidence type="ECO:0000255" key="1">
    <source>
        <dbReference type="HAMAP-Rule" id="MF_00002"/>
    </source>
</evidence>
<reference key="1">
    <citation type="journal article" date="2006" name="PLoS Biol.">
        <title>Metabolic complementarity and genomics of the dual bacterial symbiosis of sharpshooters.</title>
        <authorList>
            <person name="Wu D."/>
            <person name="Daugherty S.C."/>
            <person name="Van Aken S.E."/>
            <person name="Pai G.H."/>
            <person name="Watkins K.L."/>
            <person name="Khouri H."/>
            <person name="Tallon L.J."/>
            <person name="Zaborsky J.M."/>
            <person name="Dunbar H.E."/>
            <person name="Tran P.L."/>
            <person name="Moran N.A."/>
            <person name="Eisen J.A."/>
        </authorList>
    </citation>
    <scope>NUCLEOTIDE SEQUENCE [LARGE SCALE GENOMIC DNA]</scope>
</reference>
<sequence>MHQYHKLQVEAIYCGTVIDHIPAQVGIKLLSWFKLTATDERITIGLNLPSNKQGKKDLIKIENVLLTEEQANQLAIYAPYATVNRIANYNVVCKRTLTLPESIANVFICPNSNCVSRSEPVASGFIIKTRGKQIHLKCKYCEKVFERRAVESSNLK</sequence>
<proteinExistence type="inferred from homology"/>
<dbReference type="EMBL" id="CP000238">
    <property type="protein sequence ID" value="ABF14102.1"/>
    <property type="molecule type" value="Genomic_DNA"/>
</dbReference>
<dbReference type="RefSeq" id="WP_011520442.1">
    <property type="nucleotide sequence ID" value="NC_007984.1"/>
</dbReference>
<dbReference type="SMR" id="Q1LTK5"/>
<dbReference type="STRING" id="374463.BCI_0259"/>
<dbReference type="KEGG" id="bci:BCI_0259"/>
<dbReference type="HOGENOM" id="CLU_128576_0_0_6"/>
<dbReference type="OrthoDB" id="5599321at2"/>
<dbReference type="Proteomes" id="UP000002427">
    <property type="component" value="Chromosome"/>
</dbReference>
<dbReference type="GO" id="GO:0009347">
    <property type="term" value="C:aspartate carbamoyltransferase complex"/>
    <property type="evidence" value="ECO:0007669"/>
    <property type="project" value="InterPro"/>
</dbReference>
<dbReference type="GO" id="GO:0046872">
    <property type="term" value="F:metal ion binding"/>
    <property type="evidence" value="ECO:0007669"/>
    <property type="project" value="UniProtKB-KW"/>
</dbReference>
<dbReference type="GO" id="GO:0006207">
    <property type="term" value="P:'de novo' pyrimidine nucleobase biosynthetic process"/>
    <property type="evidence" value="ECO:0007669"/>
    <property type="project" value="InterPro"/>
</dbReference>
<dbReference type="GO" id="GO:0006221">
    <property type="term" value="P:pyrimidine nucleotide biosynthetic process"/>
    <property type="evidence" value="ECO:0007669"/>
    <property type="project" value="UniProtKB-UniRule"/>
</dbReference>
<dbReference type="Gene3D" id="2.30.30.20">
    <property type="entry name" value="Aspartate carbamoyltransferase regulatory subunit, C-terminal domain"/>
    <property type="match status" value="1"/>
</dbReference>
<dbReference type="Gene3D" id="3.30.70.140">
    <property type="entry name" value="Aspartate carbamoyltransferase regulatory subunit, N-terminal domain"/>
    <property type="match status" value="1"/>
</dbReference>
<dbReference type="HAMAP" id="MF_00002">
    <property type="entry name" value="Asp_carb_tr_reg"/>
    <property type="match status" value="1"/>
</dbReference>
<dbReference type="InterPro" id="IPR020545">
    <property type="entry name" value="Asp_carbamoyltransf_reg_N"/>
</dbReference>
<dbReference type="InterPro" id="IPR002801">
    <property type="entry name" value="Asp_carbamoylTrfase_reg"/>
</dbReference>
<dbReference type="InterPro" id="IPR020542">
    <property type="entry name" value="Asp_carbamoyltrfase_reg_C"/>
</dbReference>
<dbReference type="InterPro" id="IPR036792">
    <property type="entry name" value="Asp_carbatrfase_reg_C_sf"/>
</dbReference>
<dbReference type="InterPro" id="IPR036793">
    <property type="entry name" value="Asp_carbatrfase_reg_N_sf"/>
</dbReference>
<dbReference type="NCBIfam" id="TIGR00240">
    <property type="entry name" value="ATCase_reg"/>
    <property type="match status" value="1"/>
</dbReference>
<dbReference type="PANTHER" id="PTHR35805">
    <property type="entry name" value="ASPARTATE CARBAMOYLTRANSFERASE REGULATORY CHAIN"/>
    <property type="match status" value="1"/>
</dbReference>
<dbReference type="PANTHER" id="PTHR35805:SF1">
    <property type="entry name" value="ASPARTATE CARBAMOYLTRANSFERASE REGULATORY CHAIN"/>
    <property type="match status" value="1"/>
</dbReference>
<dbReference type="Pfam" id="PF01948">
    <property type="entry name" value="PyrI"/>
    <property type="match status" value="1"/>
</dbReference>
<dbReference type="Pfam" id="PF02748">
    <property type="entry name" value="PyrI_C"/>
    <property type="match status" value="1"/>
</dbReference>
<dbReference type="SUPFAM" id="SSF57825">
    <property type="entry name" value="Aspartate carbamoyltransferase, Regulatory-chain, C-terminal domain"/>
    <property type="match status" value="1"/>
</dbReference>
<dbReference type="SUPFAM" id="SSF54893">
    <property type="entry name" value="Aspartate carbamoyltransferase, Regulatory-chain, N-terminal domain"/>
    <property type="match status" value="1"/>
</dbReference>
<protein>
    <recommendedName>
        <fullName evidence="1">Aspartate carbamoyltransferase regulatory chain</fullName>
    </recommendedName>
</protein>
<accession>Q1LTK5</accession>
<comment type="function">
    <text evidence="1">Involved in allosteric regulation of aspartate carbamoyltransferase.</text>
</comment>
<comment type="cofactor">
    <cofactor evidence="1">
        <name>Zn(2+)</name>
        <dbReference type="ChEBI" id="CHEBI:29105"/>
    </cofactor>
    <text evidence="1">Binds 1 zinc ion per subunit.</text>
</comment>
<comment type="subunit">
    <text evidence="1">Contains catalytic and regulatory chains.</text>
</comment>
<comment type="similarity">
    <text evidence="1">Belongs to the PyrI family.</text>
</comment>
<gene>
    <name evidence="1" type="primary">pyrI</name>
    <name type="ordered locus">BCI_0259</name>
</gene>
<feature type="chain" id="PRO_1000000027" description="Aspartate carbamoyltransferase regulatory chain">
    <location>
        <begin position="1"/>
        <end position="156"/>
    </location>
</feature>
<feature type="binding site" evidence="1">
    <location>
        <position position="109"/>
    </location>
    <ligand>
        <name>Zn(2+)</name>
        <dbReference type="ChEBI" id="CHEBI:29105"/>
    </ligand>
</feature>
<feature type="binding site" evidence="1">
    <location>
        <position position="114"/>
    </location>
    <ligand>
        <name>Zn(2+)</name>
        <dbReference type="ChEBI" id="CHEBI:29105"/>
    </ligand>
</feature>
<feature type="binding site" evidence="1">
    <location>
        <position position="138"/>
    </location>
    <ligand>
        <name>Zn(2+)</name>
        <dbReference type="ChEBI" id="CHEBI:29105"/>
    </ligand>
</feature>
<feature type="binding site" evidence="1">
    <location>
        <position position="141"/>
    </location>
    <ligand>
        <name>Zn(2+)</name>
        <dbReference type="ChEBI" id="CHEBI:29105"/>
    </ligand>
</feature>
<name>PYRI_BAUCH</name>
<keyword id="KW-0479">Metal-binding</keyword>
<keyword id="KW-0665">Pyrimidine biosynthesis</keyword>
<keyword id="KW-1185">Reference proteome</keyword>
<keyword id="KW-0862">Zinc</keyword>